<reference key="1">
    <citation type="journal article" date="1997" name="Genomics">
        <title>Genomic characterization of the mouse inhibitor of apoptosis protein 1 and 2 genes.</title>
        <authorList>
            <person name="Liston P."/>
            <person name="Lefebvre C."/>
            <person name="Fong W.G."/>
            <person name="Xuan J.Y."/>
            <person name="Korneluk R.G."/>
        </authorList>
    </citation>
    <scope>NUCLEOTIDE SEQUENCE [MRNA]</scope>
    <source>
        <tissue>Skeletal muscle</tissue>
    </source>
</reference>
<reference key="2">
    <citation type="journal article" date="2009" name="PLoS Biol.">
        <title>Lineage-specific biology revealed by a finished genome assembly of the mouse.</title>
        <authorList>
            <person name="Church D.M."/>
            <person name="Goodstadt L."/>
            <person name="Hillier L.W."/>
            <person name="Zody M.C."/>
            <person name="Goldstein S."/>
            <person name="She X."/>
            <person name="Bult C.J."/>
            <person name="Agarwala R."/>
            <person name="Cherry J.L."/>
            <person name="DiCuccio M."/>
            <person name="Hlavina W."/>
            <person name="Kapustin Y."/>
            <person name="Meric P."/>
            <person name="Maglott D."/>
            <person name="Birtle Z."/>
            <person name="Marques A.C."/>
            <person name="Graves T."/>
            <person name="Zhou S."/>
            <person name="Teague B."/>
            <person name="Potamousis K."/>
            <person name="Churas C."/>
            <person name="Place M."/>
            <person name="Herschleb J."/>
            <person name="Runnheim R."/>
            <person name="Forrest D."/>
            <person name="Amos-Landgraf J."/>
            <person name="Schwartz D.C."/>
            <person name="Cheng Z."/>
            <person name="Lindblad-Toh K."/>
            <person name="Eichler E.E."/>
            <person name="Ponting C.P."/>
        </authorList>
    </citation>
    <scope>NUCLEOTIDE SEQUENCE [LARGE SCALE GENOMIC DNA]</scope>
    <source>
        <strain>C57BL/6J</strain>
    </source>
</reference>
<reference key="3">
    <citation type="journal article" date="2008" name="J. Biol. Chem.">
        <title>c-IAP1 and c-IAP2 are critical mediators of tumor necrosis factor alpha (TNFalpha)-induced NF-kappaB activation.</title>
        <authorList>
            <person name="Varfolomeev E."/>
            <person name="Goncharov T."/>
            <person name="Fedorova A.V."/>
            <person name="Dynek J.N."/>
            <person name="Zobel K."/>
            <person name="Deshayes K."/>
            <person name="Fairbrother W.J."/>
            <person name="Vucic D."/>
        </authorList>
    </citation>
    <scope>FUNCTION AS AN E3 UBIQUITIN-PROTEIN LIGASE</scope>
    <scope>CATALYTIC ACTIVITY</scope>
</reference>
<accession>O08863</accession>
<accession>E9QLX3</accession>
<evidence type="ECO:0000250" key="1"/>
<evidence type="ECO:0000250" key="2">
    <source>
        <dbReference type="UniProtKB" id="Q62210"/>
    </source>
</evidence>
<evidence type="ECO:0000255" key="3">
    <source>
        <dbReference type="PROSITE-ProRule" id="PRU00029"/>
    </source>
</evidence>
<evidence type="ECO:0000255" key="4">
    <source>
        <dbReference type="PROSITE-ProRule" id="PRU00046"/>
    </source>
</evidence>
<evidence type="ECO:0000255" key="5">
    <source>
        <dbReference type="PROSITE-ProRule" id="PRU00175"/>
    </source>
</evidence>
<evidence type="ECO:0000269" key="6">
    <source>
    </source>
</evidence>
<evidence type="ECO:0000303" key="7">
    <source>
    </source>
</evidence>
<evidence type="ECO:0000303" key="8">
    <source>
    </source>
</evidence>
<evidence type="ECO:0000305" key="9"/>
<proteinExistence type="evidence at protein level"/>
<comment type="function">
    <text evidence="6">Multi-functional protein which regulates not only caspases and apoptosis, but also modulates inflammatory signaling and immunity, mitogenic kinase signaling and cell proliferation, as well as cell invasion and metastasis. Acts as an E3 ubiquitin-protein ligase regulating NF-kappa-B signaling and regulates both canonical and non-canonical NF-kappa-B signaling by acting in opposite directions: acts as a positive regulator of the canonical pathway and suppresses constitutive activation of non-canonical NF-kappa-B signaling. The target proteins for its E3 ubiquitin-protein ligase activity include: RIPK1, RIPK2, RIPK3, RIPK4, CASP3, CASP7, CASP8, IKBKE, TRAF1, and BCL10. Acts as an important regulator of innate immune signaling via regulation of Toll-like receptors (TLRs), Nodlike receptors (NLRs) and RIG-I like receptors (RLRs), collectively referred to as pattern recognition receptors (PRRs). Protects cells from spontaneous formation of the ripoptosome, a large multi-protein complex that has the capability to kill cancer cells in a caspase-dependent and caspase-independent manner. Suppresses ripoptosome formation by ubiquitinating RIPK1 and CASP8.</text>
</comment>
<comment type="catalytic activity">
    <reaction evidence="6">
        <text>S-ubiquitinyl-[E2 ubiquitin-conjugating enzyme]-L-cysteine + [acceptor protein]-L-lysine = [E2 ubiquitin-conjugating enzyme]-L-cysteine + N(6)-ubiquitinyl-[acceptor protein]-L-lysine.</text>
        <dbReference type="EC" id="2.3.2.27"/>
    </reaction>
</comment>
<comment type="activity regulation">
    <text evidence="1">USP19 regulates the stability of BIRC3/c-IAP2 by preventing its ubiquitination.</text>
</comment>
<comment type="subunit">
    <text evidence="1">Interacts with PRSS25; the interaction inhibits apoptotic suppressor activity. The BIR motifs region interacts with TNF receptor associated factors 1 and 2 (TRAF1 and TRAF2) to form a heteromeric complex, which is then recruited to the tumor necrosis factor receptor 2 (TNFR2). Interaction with TRAF2 is required for ubiquitination of IKBKE, degradation of NFKBIA and activation of NF-kappa-B. Interacts with RIP1, RIP2, RIP3, RIP4 and USP19 (By similarity).</text>
</comment>
<comment type="interaction">
    <interactant intactId="EBI-642236">
        <id>O08863</id>
    </interactant>
    <interactant intactId="EBI-520016">
        <id>P39429</id>
        <label>Traf2</label>
    </interactant>
    <organismsDiffer>false</organismsDiffer>
    <experiments>7</experiments>
</comment>
<comment type="subcellular location">
    <subcellularLocation>
        <location evidence="1">Cytoplasm</location>
    </subcellularLocation>
    <subcellularLocation>
        <location evidence="1">Nucleus</location>
    </subcellularLocation>
</comment>
<comment type="PTM">
    <text evidence="1">Auto-ubiquitinated and degraded by the proteasome in apoptotic cells.</text>
</comment>
<comment type="similarity">
    <text evidence="9">Belongs to the IAP family.</text>
</comment>
<feature type="chain" id="PRO_0000122350" description="Baculoviral IAP repeat-containing protein 3">
    <location>
        <begin position="1"/>
        <end position="600"/>
    </location>
</feature>
<feature type="repeat" description="BIR 1">
    <location>
        <begin position="27"/>
        <end position="94"/>
    </location>
</feature>
<feature type="repeat" description="BIR 2">
    <location>
        <begin position="167"/>
        <end position="233"/>
    </location>
</feature>
<feature type="repeat" description="BIR 3">
    <location>
        <begin position="253"/>
        <end position="320"/>
    </location>
</feature>
<feature type="domain" description="CARD" evidence="4">
    <location>
        <begin position="436"/>
        <end position="525"/>
    </location>
</feature>
<feature type="zinc finger region" description="RING-type" evidence="5">
    <location>
        <begin position="553"/>
        <end position="588"/>
    </location>
</feature>
<feature type="binding site" evidence="3">
    <location>
        <position position="290"/>
    </location>
    <ligand>
        <name>Zn(2+)</name>
        <dbReference type="ChEBI" id="CHEBI:29105"/>
    </ligand>
</feature>
<feature type="binding site" evidence="3">
    <location>
        <position position="293"/>
    </location>
    <ligand>
        <name>Zn(2+)</name>
        <dbReference type="ChEBI" id="CHEBI:29105"/>
    </ligand>
</feature>
<feature type="binding site" evidence="3">
    <location>
        <position position="310"/>
    </location>
    <ligand>
        <name>Zn(2+)</name>
        <dbReference type="ChEBI" id="CHEBI:29105"/>
    </ligand>
</feature>
<feature type="binding site" evidence="3">
    <location>
        <position position="317"/>
    </location>
    <ligand>
        <name>Zn(2+)</name>
        <dbReference type="ChEBI" id="CHEBI:29105"/>
    </ligand>
</feature>
<feature type="modified residue" description="Phosphoserine" evidence="2">
    <location>
        <position position="138"/>
    </location>
</feature>
<feature type="sequence conflict" description="In Ref. 1; AAC53531." evidence="9" ref="1">
    <original>W</original>
    <variation>R</variation>
    <location>
        <position position="398"/>
    </location>
</feature>
<organism>
    <name type="scientific">Mus musculus</name>
    <name type="common">Mouse</name>
    <dbReference type="NCBI Taxonomy" id="10090"/>
    <lineage>
        <taxon>Eukaryota</taxon>
        <taxon>Metazoa</taxon>
        <taxon>Chordata</taxon>
        <taxon>Craniata</taxon>
        <taxon>Vertebrata</taxon>
        <taxon>Euteleostomi</taxon>
        <taxon>Mammalia</taxon>
        <taxon>Eutheria</taxon>
        <taxon>Euarchontoglires</taxon>
        <taxon>Glires</taxon>
        <taxon>Rodentia</taxon>
        <taxon>Myomorpha</taxon>
        <taxon>Muroidea</taxon>
        <taxon>Muridae</taxon>
        <taxon>Murinae</taxon>
        <taxon>Mus</taxon>
        <taxon>Mus</taxon>
    </lineage>
</organism>
<protein>
    <recommendedName>
        <fullName>Baculoviral IAP repeat-containing protein 3</fullName>
        <ecNumber evidence="6">2.3.2.27</ecNumber>
    </recommendedName>
    <alternativeName>
        <fullName>Cellular inhibitor of apoptosis 2</fullName>
        <shortName evidence="7">C-IAP2</shortName>
    </alternativeName>
    <alternativeName>
        <fullName evidence="8">Inhibitor of apoptosis protein 1</fullName>
        <shortName evidence="8">mIAP1</shortName>
    </alternativeName>
    <alternativeName>
        <fullName evidence="9">RING-type E3 ubiquitin transferase BIRC3</fullName>
    </alternativeName>
</protein>
<name>BIRC3_MOUSE</name>
<sequence>MVQDSAFLAKLMKSADTFELKYDFSCELYRLSTYSAFPRGVPVSERSLARAGFYYTGANDKVKCFCCGLMLDNWKQGDSPMEKHRKLYPSCNFVQTLNPANSLEASPRPSLPSTAMSTMPLSFASSENTGYFSGSYSSFPSDPVNFRANQDCPALSTSPYHFAMNTEKARLLTYETWPLSFLSPAKLAKAGFYYIGPGDRVACFACDGKLSNWERKDDAMSEHQRHFPSCPFLKDLGQSASRYTVSNLSMQTHAARIRTFSNWPSSALVHSQELASAGFYYTGHSDDVKCFCCDGGLRCWESGDDPWVEHAKWFPRCEYLLRIKGQEFVSQVQAGYPHLLEQLLSTSDSPEDENADAAIVHFGPGESSEDVVMMSTPVVKAALEMGFSRSLVRQTVQWQILATGENYRTVSDLVIGLLDAEDEMREEQMEQAAEEEESDDLALIRKNKMVLFQHLTCVTPMLYCLLSARAITEQECNAVKQKPHTLQASTLIDTVLAKGNTAATSFRNSLREIDPALYRDIFVQQDIRSLPTDDIAALPMEEQLRKLQEERMCKVCMDREVSIVFIPCGHLVVCKDCAPSLRKCPICRGTIKGTVRTFLS</sequence>
<gene>
    <name type="primary">Birc3</name>
</gene>
<keyword id="KW-0053">Apoptosis</keyword>
<keyword id="KW-0963">Cytoplasm</keyword>
<keyword id="KW-0479">Metal-binding</keyword>
<keyword id="KW-0539">Nucleus</keyword>
<keyword id="KW-0597">Phosphoprotein</keyword>
<keyword id="KW-1185">Reference proteome</keyword>
<keyword id="KW-0677">Repeat</keyword>
<keyword id="KW-0808">Transferase</keyword>
<keyword id="KW-0832">Ubl conjugation</keyword>
<keyword id="KW-0833">Ubl conjugation pathway</keyword>
<keyword id="KW-0862">Zinc</keyword>
<keyword id="KW-0863">Zinc-finger</keyword>
<dbReference type="EC" id="2.3.2.27" evidence="6"/>
<dbReference type="EMBL" id="U88908">
    <property type="protein sequence ID" value="AAC53531.1"/>
    <property type="molecule type" value="mRNA"/>
</dbReference>
<dbReference type="EMBL" id="CT030639">
    <property type="status" value="NOT_ANNOTATED_CDS"/>
    <property type="molecule type" value="Genomic_DNA"/>
</dbReference>
<dbReference type="RefSeq" id="NP_031490.2">
    <property type="nucleotide sequence ID" value="NM_007464.3"/>
</dbReference>
<dbReference type="SMR" id="O08863"/>
<dbReference type="BioGRID" id="198147">
    <property type="interactions" value="20"/>
</dbReference>
<dbReference type="CORUM" id="O08863"/>
<dbReference type="DIP" id="DIP-43742N"/>
<dbReference type="FunCoup" id="O08863">
    <property type="interactions" value="1979"/>
</dbReference>
<dbReference type="IntAct" id="O08863">
    <property type="interactions" value="6"/>
</dbReference>
<dbReference type="MINT" id="O08863"/>
<dbReference type="STRING" id="10090.ENSMUSP00000013949"/>
<dbReference type="MEROPS" id="I32.003"/>
<dbReference type="iPTMnet" id="O08863"/>
<dbReference type="PhosphoSitePlus" id="O08863"/>
<dbReference type="PaxDb" id="10090-ENSMUSP00000013949"/>
<dbReference type="ProteomicsDB" id="273618"/>
<dbReference type="DNASU" id="11796"/>
<dbReference type="GeneID" id="11796"/>
<dbReference type="KEGG" id="mmu:11796"/>
<dbReference type="AGR" id="MGI:1197007"/>
<dbReference type="CTD" id="330"/>
<dbReference type="MGI" id="MGI:1197007">
    <property type="gene designation" value="Birc3"/>
</dbReference>
<dbReference type="eggNOG" id="KOG1101">
    <property type="taxonomic scope" value="Eukaryota"/>
</dbReference>
<dbReference type="InParanoid" id="O08863"/>
<dbReference type="OrthoDB" id="4034597at2759"/>
<dbReference type="Reactome" id="R-MMU-168638">
    <property type="pathway name" value="NOD1/2 Signaling Pathway"/>
</dbReference>
<dbReference type="Reactome" id="R-MMU-5357786">
    <property type="pathway name" value="TNFR1-induced proapoptotic signaling"/>
</dbReference>
<dbReference type="Reactome" id="R-MMU-5357905">
    <property type="pathway name" value="Regulation of TNFR1 signaling"/>
</dbReference>
<dbReference type="Reactome" id="R-MMU-5357956">
    <property type="pathway name" value="TNFR1-induced NF-kappa-B signaling pathway"/>
</dbReference>
<dbReference type="Reactome" id="R-MMU-5668541">
    <property type="pathway name" value="TNFR2 non-canonical NF-kB pathway"/>
</dbReference>
<dbReference type="Reactome" id="R-MMU-5675482">
    <property type="pathway name" value="Regulation of necroptotic cell death"/>
</dbReference>
<dbReference type="Reactome" id="R-MMU-5676594">
    <property type="pathway name" value="TNF receptor superfamily (TNFSF) members mediating non-canonical NF-kB pathway"/>
</dbReference>
<dbReference type="Reactome" id="R-MMU-5689880">
    <property type="pathway name" value="Ub-specific processing proteases"/>
</dbReference>
<dbReference type="Reactome" id="R-MMU-937041">
    <property type="pathway name" value="IKK complex recruitment mediated by RIP1"/>
</dbReference>
<dbReference type="BioGRID-ORCS" id="11796">
    <property type="hits" value="5 hits in 80 CRISPR screens"/>
</dbReference>
<dbReference type="ChiTaRS" id="Birc3">
    <property type="organism name" value="mouse"/>
</dbReference>
<dbReference type="PRO" id="PR:O08863"/>
<dbReference type="Proteomes" id="UP000000589">
    <property type="component" value="Unplaced"/>
</dbReference>
<dbReference type="RNAct" id="O08863">
    <property type="molecule type" value="protein"/>
</dbReference>
<dbReference type="GO" id="GO:0005737">
    <property type="term" value="C:cytoplasm"/>
    <property type="evidence" value="ECO:0000250"/>
    <property type="project" value="UniProtKB"/>
</dbReference>
<dbReference type="GO" id="GO:0005634">
    <property type="term" value="C:nucleus"/>
    <property type="evidence" value="ECO:0000250"/>
    <property type="project" value="UniProtKB"/>
</dbReference>
<dbReference type="GO" id="GO:0016740">
    <property type="term" value="F:transferase activity"/>
    <property type="evidence" value="ECO:0007669"/>
    <property type="project" value="UniProtKB-KW"/>
</dbReference>
<dbReference type="GO" id="GO:0008270">
    <property type="term" value="F:zinc ion binding"/>
    <property type="evidence" value="ECO:0007669"/>
    <property type="project" value="UniProtKB-KW"/>
</dbReference>
<dbReference type="GO" id="GO:0006915">
    <property type="term" value="P:apoptotic process"/>
    <property type="evidence" value="ECO:0007669"/>
    <property type="project" value="UniProtKB-KW"/>
</dbReference>
<dbReference type="GO" id="GO:0071356">
    <property type="term" value="P:cellular response to tumor necrosis factor"/>
    <property type="evidence" value="ECO:0000316"/>
    <property type="project" value="MGI"/>
</dbReference>
<dbReference type="GO" id="GO:0070266">
    <property type="term" value="P:necroptotic process"/>
    <property type="evidence" value="ECO:0000314"/>
    <property type="project" value="UniProtKB"/>
</dbReference>
<dbReference type="GO" id="GO:0060546">
    <property type="term" value="P:negative regulation of necroptotic process"/>
    <property type="evidence" value="ECO:0000315"/>
    <property type="project" value="UniProtKB"/>
</dbReference>
<dbReference type="GO" id="GO:0042326">
    <property type="term" value="P:negative regulation of phosphorylation"/>
    <property type="evidence" value="ECO:0000315"/>
    <property type="project" value="UniProtKB"/>
</dbReference>
<dbReference type="GO" id="GO:2000378">
    <property type="term" value="P:negative regulation of reactive oxygen species metabolic process"/>
    <property type="evidence" value="ECO:0000315"/>
    <property type="project" value="UniProtKB"/>
</dbReference>
<dbReference type="GO" id="GO:1902916">
    <property type="term" value="P:positive regulation of protein polyubiquitination"/>
    <property type="evidence" value="ECO:0000316"/>
    <property type="project" value="MGI"/>
</dbReference>
<dbReference type="GO" id="GO:0042981">
    <property type="term" value="P:regulation of apoptotic process"/>
    <property type="evidence" value="ECO:0007669"/>
    <property type="project" value="InterPro"/>
</dbReference>
<dbReference type="GO" id="GO:1901222">
    <property type="term" value="P:regulation of non-canonical NF-kappaB signal transduction"/>
    <property type="evidence" value="ECO:0000316"/>
    <property type="project" value="MGI"/>
</dbReference>
<dbReference type="CDD" id="cd00022">
    <property type="entry name" value="BIR"/>
    <property type="match status" value="3"/>
</dbReference>
<dbReference type="CDD" id="cd08329">
    <property type="entry name" value="CARD_BIRC2_BIRC3"/>
    <property type="match status" value="1"/>
</dbReference>
<dbReference type="CDD" id="cd16713">
    <property type="entry name" value="RING-HC_BIRC2_3_7"/>
    <property type="match status" value="1"/>
</dbReference>
<dbReference type="CDD" id="cd14394">
    <property type="entry name" value="UBA_BIRC2_3"/>
    <property type="match status" value="1"/>
</dbReference>
<dbReference type="FunFam" id="1.10.1170.10:FF:000005">
    <property type="entry name" value="Baculoviral IAP repeat containing 2"/>
    <property type="match status" value="1"/>
</dbReference>
<dbReference type="FunFam" id="1.10.1170.10:FF:000006">
    <property type="entry name" value="Baculoviral IAP repeat containing 2"/>
    <property type="match status" value="1"/>
</dbReference>
<dbReference type="FunFam" id="1.10.1170.10:FF:000010">
    <property type="entry name" value="Baculoviral IAP repeat containing 2"/>
    <property type="match status" value="1"/>
</dbReference>
<dbReference type="FunFam" id="3.30.40.10:FF:000184">
    <property type="entry name" value="Baculoviral IAP repeat containing 2"/>
    <property type="match status" value="1"/>
</dbReference>
<dbReference type="FunFam" id="1.10.1170.10:FF:000002">
    <property type="entry name" value="Baculoviral IAP repeat containing 7"/>
    <property type="match status" value="1"/>
</dbReference>
<dbReference type="FunFam" id="1.10.8.10:FF:000084">
    <property type="entry name" value="E3 ubiquitin-protein ligase XIAP"/>
    <property type="match status" value="1"/>
</dbReference>
<dbReference type="Gene3D" id="1.10.533.10">
    <property type="entry name" value="Death Domain, Fas"/>
    <property type="match status" value="1"/>
</dbReference>
<dbReference type="Gene3D" id="1.10.8.10">
    <property type="entry name" value="DNA helicase RuvA subunit, C-terminal domain"/>
    <property type="match status" value="1"/>
</dbReference>
<dbReference type="Gene3D" id="1.10.1170.10">
    <property type="entry name" value="Inhibitor Of Apoptosis Protein (2mihbC-IAP-1), Chain A"/>
    <property type="match status" value="3"/>
</dbReference>
<dbReference type="InterPro" id="IPR001370">
    <property type="entry name" value="BIR_rpt"/>
</dbReference>
<dbReference type="InterPro" id="IPR048875">
    <property type="entry name" value="BIRC2-3-like_UBA"/>
</dbReference>
<dbReference type="InterPro" id="IPR041933">
    <property type="entry name" value="BIRC2/BIRC3_UBA"/>
</dbReference>
<dbReference type="InterPro" id="IPR001315">
    <property type="entry name" value="CARD"/>
</dbReference>
<dbReference type="InterPro" id="IPR011029">
    <property type="entry name" value="DEATH-like_dom_sf"/>
</dbReference>
<dbReference type="InterPro" id="IPR050784">
    <property type="entry name" value="IAP"/>
</dbReference>
<dbReference type="InterPro" id="IPR001841">
    <property type="entry name" value="Znf_RING"/>
</dbReference>
<dbReference type="PANTHER" id="PTHR10044:SF178">
    <property type="entry name" value="BACULOVIRAL IAP REPEAT-CONTAINING PROTEIN 3"/>
    <property type="match status" value="1"/>
</dbReference>
<dbReference type="PANTHER" id="PTHR10044">
    <property type="entry name" value="INHIBITOR OF APOPTOSIS"/>
    <property type="match status" value="1"/>
</dbReference>
<dbReference type="Pfam" id="PF00653">
    <property type="entry name" value="BIR"/>
    <property type="match status" value="3"/>
</dbReference>
<dbReference type="Pfam" id="PF00619">
    <property type="entry name" value="CARD"/>
    <property type="match status" value="1"/>
</dbReference>
<dbReference type="Pfam" id="PF21290">
    <property type="entry name" value="UBA_BIRC2-3"/>
    <property type="match status" value="1"/>
</dbReference>
<dbReference type="Pfam" id="PF13920">
    <property type="entry name" value="zf-C3HC4_3"/>
    <property type="match status" value="1"/>
</dbReference>
<dbReference type="SMART" id="SM00238">
    <property type="entry name" value="BIR"/>
    <property type="match status" value="3"/>
</dbReference>
<dbReference type="SMART" id="SM00114">
    <property type="entry name" value="CARD"/>
    <property type="match status" value="1"/>
</dbReference>
<dbReference type="SMART" id="SM00184">
    <property type="entry name" value="RING"/>
    <property type="match status" value="1"/>
</dbReference>
<dbReference type="SUPFAM" id="SSF47986">
    <property type="entry name" value="DEATH domain"/>
    <property type="match status" value="1"/>
</dbReference>
<dbReference type="SUPFAM" id="SSF57924">
    <property type="entry name" value="Inhibitor of apoptosis (IAP) repeat"/>
    <property type="match status" value="3"/>
</dbReference>
<dbReference type="PROSITE" id="PS01282">
    <property type="entry name" value="BIR_REPEAT_1"/>
    <property type="match status" value="3"/>
</dbReference>
<dbReference type="PROSITE" id="PS50143">
    <property type="entry name" value="BIR_REPEAT_2"/>
    <property type="match status" value="3"/>
</dbReference>
<dbReference type="PROSITE" id="PS50209">
    <property type="entry name" value="CARD"/>
    <property type="match status" value="1"/>
</dbReference>
<dbReference type="PROSITE" id="PS50089">
    <property type="entry name" value="ZF_RING_2"/>
    <property type="match status" value="1"/>
</dbReference>